<reference key="1">
    <citation type="journal article" date="1999" name="Nature">
        <title>Sequence and analysis of chromosome 4 of the plant Arabidopsis thaliana.</title>
        <authorList>
            <person name="Mayer K.F.X."/>
            <person name="Schueller C."/>
            <person name="Wambutt R."/>
            <person name="Murphy G."/>
            <person name="Volckaert G."/>
            <person name="Pohl T."/>
            <person name="Duesterhoeft A."/>
            <person name="Stiekema W."/>
            <person name="Entian K.-D."/>
            <person name="Terryn N."/>
            <person name="Harris B."/>
            <person name="Ansorge W."/>
            <person name="Brandt P."/>
            <person name="Grivell L.A."/>
            <person name="Rieger M."/>
            <person name="Weichselgartner M."/>
            <person name="de Simone V."/>
            <person name="Obermaier B."/>
            <person name="Mache R."/>
            <person name="Mueller M."/>
            <person name="Kreis M."/>
            <person name="Delseny M."/>
            <person name="Puigdomenech P."/>
            <person name="Watson M."/>
            <person name="Schmidtheini T."/>
            <person name="Reichert B."/>
            <person name="Portetelle D."/>
            <person name="Perez-Alonso M."/>
            <person name="Boutry M."/>
            <person name="Bancroft I."/>
            <person name="Vos P."/>
            <person name="Hoheisel J."/>
            <person name="Zimmermann W."/>
            <person name="Wedler H."/>
            <person name="Ridley P."/>
            <person name="Langham S.-A."/>
            <person name="McCullagh B."/>
            <person name="Bilham L."/>
            <person name="Robben J."/>
            <person name="van der Schueren J."/>
            <person name="Grymonprez B."/>
            <person name="Chuang Y.-J."/>
            <person name="Vandenbussche F."/>
            <person name="Braeken M."/>
            <person name="Weltjens I."/>
            <person name="Voet M."/>
            <person name="Bastiaens I."/>
            <person name="Aert R."/>
            <person name="Defoor E."/>
            <person name="Weitzenegger T."/>
            <person name="Bothe G."/>
            <person name="Ramsperger U."/>
            <person name="Hilbert H."/>
            <person name="Braun M."/>
            <person name="Holzer E."/>
            <person name="Brandt A."/>
            <person name="Peters S."/>
            <person name="van Staveren M."/>
            <person name="Dirkse W."/>
            <person name="Mooijman P."/>
            <person name="Klein Lankhorst R."/>
            <person name="Rose M."/>
            <person name="Hauf J."/>
            <person name="Koetter P."/>
            <person name="Berneiser S."/>
            <person name="Hempel S."/>
            <person name="Feldpausch M."/>
            <person name="Lamberth S."/>
            <person name="Van den Daele H."/>
            <person name="De Keyser A."/>
            <person name="Buysshaert C."/>
            <person name="Gielen J."/>
            <person name="Villarroel R."/>
            <person name="De Clercq R."/>
            <person name="van Montagu M."/>
            <person name="Rogers J."/>
            <person name="Cronin A."/>
            <person name="Quail M.A."/>
            <person name="Bray-Allen S."/>
            <person name="Clark L."/>
            <person name="Doggett J."/>
            <person name="Hall S."/>
            <person name="Kay M."/>
            <person name="Lennard N."/>
            <person name="McLay K."/>
            <person name="Mayes R."/>
            <person name="Pettett A."/>
            <person name="Rajandream M.A."/>
            <person name="Lyne M."/>
            <person name="Benes V."/>
            <person name="Rechmann S."/>
            <person name="Borkova D."/>
            <person name="Bloecker H."/>
            <person name="Scharfe M."/>
            <person name="Grimm M."/>
            <person name="Loehnert T.-H."/>
            <person name="Dose S."/>
            <person name="de Haan M."/>
            <person name="Maarse A.C."/>
            <person name="Schaefer M."/>
            <person name="Mueller-Auer S."/>
            <person name="Gabel C."/>
            <person name="Fuchs M."/>
            <person name="Fartmann B."/>
            <person name="Granderath K."/>
            <person name="Dauner D."/>
            <person name="Herzl A."/>
            <person name="Neumann S."/>
            <person name="Argiriou A."/>
            <person name="Vitale D."/>
            <person name="Liguori R."/>
            <person name="Piravandi E."/>
            <person name="Massenet O."/>
            <person name="Quigley F."/>
            <person name="Clabauld G."/>
            <person name="Muendlein A."/>
            <person name="Felber R."/>
            <person name="Schnabl S."/>
            <person name="Hiller R."/>
            <person name="Schmidt W."/>
            <person name="Lecharny A."/>
            <person name="Aubourg S."/>
            <person name="Chefdor F."/>
            <person name="Cooke R."/>
            <person name="Berger C."/>
            <person name="Monfort A."/>
            <person name="Casacuberta E."/>
            <person name="Gibbons T."/>
            <person name="Weber N."/>
            <person name="Vandenbol M."/>
            <person name="Bargues M."/>
            <person name="Terol J."/>
            <person name="Torres A."/>
            <person name="Perez-Perez A."/>
            <person name="Purnelle B."/>
            <person name="Bent E."/>
            <person name="Johnson S."/>
            <person name="Tacon D."/>
            <person name="Jesse T."/>
            <person name="Heijnen L."/>
            <person name="Schwarz S."/>
            <person name="Scholler P."/>
            <person name="Heber S."/>
            <person name="Francs P."/>
            <person name="Bielke C."/>
            <person name="Frishman D."/>
            <person name="Haase D."/>
            <person name="Lemcke K."/>
            <person name="Mewes H.-W."/>
            <person name="Stocker S."/>
            <person name="Zaccaria P."/>
            <person name="Bevan M."/>
            <person name="Wilson R.K."/>
            <person name="de la Bastide M."/>
            <person name="Habermann K."/>
            <person name="Parnell L."/>
            <person name="Dedhia N."/>
            <person name="Gnoj L."/>
            <person name="Schutz K."/>
            <person name="Huang E."/>
            <person name="Spiegel L."/>
            <person name="Sekhon M."/>
            <person name="Murray J."/>
            <person name="Sheet P."/>
            <person name="Cordes M."/>
            <person name="Abu-Threideh J."/>
            <person name="Stoneking T."/>
            <person name="Kalicki J."/>
            <person name="Graves T."/>
            <person name="Harmon G."/>
            <person name="Edwards J."/>
            <person name="Latreille P."/>
            <person name="Courtney L."/>
            <person name="Cloud J."/>
            <person name="Abbott A."/>
            <person name="Scott K."/>
            <person name="Johnson D."/>
            <person name="Minx P."/>
            <person name="Bentley D."/>
            <person name="Fulton B."/>
            <person name="Miller N."/>
            <person name="Greco T."/>
            <person name="Kemp K."/>
            <person name="Kramer J."/>
            <person name="Fulton L."/>
            <person name="Mardis E."/>
            <person name="Dante M."/>
            <person name="Pepin K."/>
            <person name="Hillier L.W."/>
            <person name="Nelson J."/>
            <person name="Spieth J."/>
            <person name="Ryan E."/>
            <person name="Andrews S."/>
            <person name="Geisel C."/>
            <person name="Layman D."/>
            <person name="Du H."/>
            <person name="Ali J."/>
            <person name="Berghoff A."/>
            <person name="Jones K."/>
            <person name="Drone K."/>
            <person name="Cotton M."/>
            <person name="Joshu C."/>
            <person name="Antonoiu B."/>
            <person name="Zidanic M."/>
            <person name="Strong C."/>
            <person name="Sun H."/>
            <person name="Lamar B."/>
            <person name="Yordan C."/>
            <person name="Ma P."/>
            <person name="Zhong J."/>
            <person name="Preston R."/>
            <person name="Vil D."/>
            <person name="Shekher M."/>
            <person name="Matero A."/>
            <person name="Shah R."/>
            <person name="Swaby I.K."/>
            <person name="O'Shaughnessy A."/>
            <person name="Rodriguez M."/>
            <person name="Hoffman J."/>
            <person name="Till S."/>
            <person name="Granat S."/>
            <person name="Shohdy N."/>
            <person name="Hasegawa A."/>
            <person name="Hameed A."/>
            <person name="Lodhi M."/>
            <person name="Johnson A."/>
            <person name="Chen E."/>
            <person name="Marra M.A."/>
            <person name="Martienssen R."/>
            <person name="McCombie W.R."/>
        </authorList>
    </citation>
    <scope>NUCLEOTIDE SEQUENCE [LARGE SCALE GENOMIC DNA]</scope>
    <source>
        <strain>cv. Columbia</strain>
    </source>
</reference>
<reference key="2">
    <citation type="journal article" date="2017" name="Plant J.">
        <title>Araport11: a complete reannotation of the Arabidopsis thaliana reference genome.</title>
        <authorList>
            <person name="Cheng C.Y."/>
            <person name="Krishnakumar V."/>
            <person name="Chan A.P."/>
            <person name="Thibaud-Nissen F."/>
            <person name="Schobel S."/>
            <person name="Town C.D."/>
        </authorList>
    </citation>
    <scope>GENOME REANNOTATION</scope>
    <source>
        <strain>cv. Columbia</strain>
    </source>
</reference>
<reference key="3">
    <citation type="journal article" date="2003" name="Science">
        <title>Empirical analysis of transcriptional activity in the Arabidopsis genome.</title>
        <authorList>
            <person name="Yamada K."/>
            <person name="Lim J."/>
            <person name="Dale J.M."/>
            <person name="Chen H."/>
            <person name="Shinn P."/>
            <person name="Palm C.J."/>
            <person name="Southwick A.M."/>
            <person name="Wu H.C."/>
            <person name="Kim C.J."/>
            <person name="Nguyen M."/>
            <person name="Pham P.K."/>
            <person name="Cheuk R.F."/>
            <person name="Karlin-Newmann G."/>
            <person name="Liu S.X."/>
            <person name="Lam B."/>
            <person name="Sakano H."/>
            <person name="Wu T."/>
            <person name="Yu G."/>
            <person name="Miranda M."/>
            <person name="Quach H.L."/>
            <person name="Tripp M."/>
            <person name="Chang C.H."/>
            <person name="Lee J.M."/>
            <person name="Toriumi M.J."/>
            <person name="Chan M.M."/>
            <person name="Tang C.C."/>
            <person name="Onodera C.S."/>
            <person name="Deng J.M."/>
            <person name="Akiyama K."/>
            <person name="Ansari Y."/>
            <person name="Arakawa T."/>
            <person name="Banh J."/>
            <person name="Banno F."/>
            <person name="Bowser L."/>
            <person name="Brooks S.Y."/>
            <person name="Carninci P."/>
            <person name="Chao Q."/>
            <person name="Choy N."/>
            <person name="Enju A."/>
            <person name="Goldsmith A.D."/>
            <person name="Gurjal M."/>
            <person name="Hansen N.F."/>
            <person name="Hayashizaki Y."/>
            <person name="Johnson-Hopson C."/>
            <person name="Hsuan V.W."/>
            <person name="Iida K."/>
            <person name="Karnes M."/>
            <person name="Khan S."/>
            <person name="Koesema E."/>
            <person name="Ishida J."/>
            <person name="Jiang P.X."/>
            <person name="Jones T."/>
            <person name="Kawai J."/>
            <person name="Kamiya A."/>
            <person name="Meyers C."/>
            <person name="Nakajima M."/>
            <person name="Narusaka M."/>
            <person name="Seki M."/>
            <person name="Sakurai T."/>
            <person name="Satou M."/>
            <person name="Tamse R."/>
            <person name="Vaysberg M."/>
            <person name="Wallender E.K."/>
            <person name="Wong C."/>
            <person name="Yamamura Y."/>
            <person name="Yuan S."/>
            <person name="Shinozaki K."/>
            <person name="Davis R.W."/>
            <person name="Theologis A."/>
            <person name="Ecker J.R."/>
        </authorList>
    </citation>
    <scope>NUCLEOTIDE SEQUENCE [LARGE SCALE MRNA] (ISOFORM 2)</scope>
    <source>
        <strain>cv. Columbia</strain>
    </source>
</reference>
<reference key="4">
    <citation type="submission" date="2002-03" db="EMBL/GenBank/DDBJ databases">
        <title>Full-length cDNA from Arabidopsis thaliana.</title>
        <authorList>
            <person name="Brover V.V."/>
            <person name="Troukhan M.E."/>
            <person name="Alexandrov N.A."/>
            <person name="Lu Y.-P."/>
            <person name="Flavell R.B."/>
            <person name="Feldmann K.A."/>
        </authorList>
    </citation>
    <scope>NUCLEOTIDE SEQUENCE [LARGE SCALE MRNA] (ISOFORM 1)</scope>
</reference>
<reference key="5">
    <citation type="journal article" date="2002" name="Trends Plant Sci.">
        <title>The Dof family of plant transcription factors.</title>
        <authorList>
            <person name="Yanagisawa S."/>
        </authorList>
    </citation>
    <scope>GENE FAMILY</scope>
    <scope>NOMENCLATURE</scope>
</reference>
<reference key="6">
    <citation type="journal article" date="2010" name="Int. J. Dev. Biol.">
        <title>Expression of DOF genes identifies early stages of vascular development in Arabidopsis leaves.</title>
        <authorList>
            <person name="Gardiner J."/>
            <person name="Sherr I."/>
            <person name="Scarpella E."/>
        </authorList>
    </citation>
    <scope>DEVELOPMENTAL STAGE</scope>
    <scope>TISSUE SPECIFICITY</scope>
    <source>
        <strain>cv. Columbia</strain>
    </source>
</reference>
<proteinExistence type="evidence at transcript level"/>
<gene>
    <name evidence="5" type="primary">DOF4.6</name>
    <name evidence="8" type="ordered locus">At4g24060</name>
    <name evidence="9" type="ORF">T19F6.13</name>
</gene>
<sequence>MDTAQWPQEIVVKPLEEIVTNTCPKPQPQPLQPQQPPSVGGERKARPEKDQAVNCPRCNSTNTKFCYYNNYSLTQPRYFCKGCRRYWTEGGSLRNIPVGGGSRKNKRSHSSSSDISNNHSDSTQPATKKHLSDHHHHLMSMSQQGLTGQNPKFLETTQQDLNLGFSPHGMIRTNFTDLIHNIGNNTNKSNNNNNPLIVSSCSAMATSSLDLIRNNSNNGNSSNSSFMGFPVHNQDPASGGFSMQDHYKPCNTNTTLLGFSLDHHHNNGFHGGFQGGEEGGEGGDDVNGRHLFPFEDLKLPVSSSSATINVDINEHQKRGSGSDAAATSGGYWTGMLSGGSWC</sequence>
<name>DOF46_ARATH</name>
<keyword id="KW-0025">Alternative splicing</keyword>
<keyword id="KW-0238">DNA-binding</keyword>
<keyword id="KW-0479">Metal-binding</keyword>
<keyword id="KW-0539">Nucleus</keyword>
<keyword id="KW-1185">Reference proteome</keyword>
<keyword id="KW-0804">Transcription</keyword>
<keyword id="KW-0805">Transcription regulation</keyword>
<keyword id="KW-0862">Zinc</keyword>
<keyword id="KW-0863">Zinc-finger</keyword>
<evidence type="ECO:0000250" key="1"/>
<evidence type="ECO:0000255" key="2">
    <source>
        <dbReference type="PROSITE-ProRule" id="PRU00071"/>
    </source>
</evidence>
<evidence type="ECO:0000256" key="3">
    <source>
        <dbReference type="SAM" id="MobiDB-lite"/>
    </source>
</evidence>
<evidence type="ECO:0000269" key="4">
    <source>
    </source>
</evidence>
<evidence type="ECO:0000303" key="5">
    <source>
    </source>
</evidence>
<evidence type="ECO:0000303" key="6">
    <source>
    </source>
</evidence>
<evidence type="ECO:0000305" key="7"/>
<evidence type="ECO:0000312" key="8">
    <source>
        <dbReference type="Araport" id="AT4G24060"/>
    </source>
</evidence>
<evidence type="ECO:0000312" key="9">
    <source>
        <dbReference type="EMBL" id="CAB51649.1"/>
    </source>
</evidence>
<comment type="function">
    <text evidence="1">Transcription factor that binds specifically to a 5'-AA[AG]G-3' consensus core sequence.</text>
</comment>
<comment type="subcellular location">
    <subcellularLocation>
        <location evidence="2">Nucleus</location>
    </subcellularLocation>
</comment>
<comment type="alternative products">
    <event type="alternative splicing"/>
    <isoform>
        <id>Q8LAP8-1</id>
        <name>1</name>
        <sequence type="displayed"/>
    </isoform>
    <isoform>
        <id>Q8LAP8-2</id>
        <name>2</name>
        <sequence type="described" ref="VSP_011869"/>
    </isoform>
</comment>
<comment type="tissue specificity">
    <text evidence="4">Accumulates in the stele.</text>
</comment>
<comment type="developmental stage">
    <text evidence="4">Expressed at preprocambial stages first in wide domains, and later confined to sites of vein development.</text>
</comment>
<comment type="miscellaneous">
    <molecule>Isoform 2</molecule>
    <text evidence="7">May be due to an intron retention.</text>
</comment>
<comment type="sequence caution" evidence="7">
    <conflict type="erroneous gene model prediction">
        <sequence resource="EMBL-CDS" id="CAB51649"/>
    </conflict>
</comment>
<comment type="sequence caution" evidence="7">
    <conflict type="erroneous gene model prediction">
        <sequence resource="EMBL-CDS" id="CAB81324"/>
    </conflict>
</comment>
<organism>
    <name type="scientific">Arabidopsis thaliana</name>
    <name type="common">Mouse-ear cress</name>
    <dbReference type="NCBI Taxonomy" id="3702"/>
    <lineage>
        <taxon>Eukaryota</taxon>
        <taxon>Viridiplantae</taxon>
        <taxon>Streptophyta</taxon>
        <taxon>Embryophyta</taxon>
        <taxon>Tracheophyta</taxon>
        <taxon>Spermatophyta</taxon>
        <taxon>Magnoliopsida</taxon>
        <taxon>eudicotyledons</taxon>
        <taxon>Gunneridae</taxon>
        <taxon>Pentapetalae</taxon>
        <taxon>rosids</taxon>
        <taxon>malvids</taxon>
        <taxon>Brassicales</taxon>
        <taxon>Brassicaceae</taxon>
        <taxon>Camelineae</taxon>
        <taxon>Arabidopsis</taxon>
    </lineage>
</organism>
<accession>Q8LAP8</accession>
<accession>O22984</accession>
<accession>Q94C22</accession>
<accession>Q9SU49</accession>
<feature type="chain" id="PRO_0000074289" description="Dof zinc finger protein DOF4.6">
    <location>
        <begin position="1"/>
        <end position="342"/>
    </location>
</feature>
<feature type="zinc finger region" description="Dof-type" evidence="2">
    <location>
        <begin position="53"/>
        <end position="107"/>
    </location>
</feature>
<feature type="region of interest" description="Disordered" evidence="3">
    <location>
        <begin position="21"/>
        <end position="54"/>
    </location>
</feature>
<feature type="region of interest" description="Disordered" evidence="3">
    <location>
        <begin position="94"/>
        <end position="136"/>
    </location>
</feature>
<feature type="compositionally biased region" description="Pro residues" evidence="3">
    <location>
        <begin position="25"/>
        <end position="36"/>
    </location>
</feature>
<feature type="compositionally biased region" description="Basic and acidic residues" evidence="3">
    <location>
        <begin position="41"/>
        <end position="51"/>
    </location>
</feature>
<feature type="compositionally biased region" description="Low complexity" evidence="3">
    <location>
        <begin position="110"/>
        <end position="122"/>
    </location>
</feature>
<feature type="compositionally biased region" description="Basic residues" evidence="3">
    <location>
        <begin position="127"/>
        <end position="136"/>
    </location>
</feature>
<feature type="binding site" evidence="2">
    <location>
        <position position="55"/>
    </location>
    <ligand>
        <name>Zn(2+)</name>
        <dbReference type="ChEBI" id="CHEBI:29105"/>
    </ligand>
</feature>
<feature type="binding site" evidence="2">
    <location>
        <position position="58"/>
    </location>
    <ligand>
        <name>Zn(2+)</name>
        <dbReference type="ChEBI" id="CHEBI:29105"/>
    </ligand>
</feature>
<feature type="binding site" evidence="2">
    <location>
        <position position="80"/>
    </location>
    <ligand>
        <name>Zn(2+)</name>
        <dbReference type="ChEBI" id="CHEBI:29105"/>
    </ligand>
</feature>
<feature type="binding site" evidence="2">
    <location>
        <position position="83"/>
    </location>
    <ligand>
        <name>Zn(2+)</name>
        <dbReference type="ChEBI" id="CHEBI:29105"/>
    </ligand>
</feature>
<feature type="splice variant" id="VSP_011869" description="In isoform 2." evidence="6">
    <location>
        <begin position="1"/>
        <end position="138"/>
    </location>
</feature>
<feature type="sequence conflict" description="In Ref. 4; AAM65223." evidence="7" ref="4">
    <original>P</original>
    <variation>T</variation>
    <location>
        <position position="33"/>
    </location>
</feature>
<feature type="sequence conflict" description="In Ref. 4; AAM65223." evidence="7" ref="4">
    <original>S</original>
    <variation>F</variation>
    <location>
        <position position="111"/>
    </location>
</feature>
<feature type="sequence conflict" description="In Ref. 4; AAM65223." evidence="7" ref="4">
    <original>A</original>
    <variation>T</variation>
    <location>
        <position position="203"/>
    </location>
</feature>
<feature type="sequence conflict" description="In Ref. 4; AAM65223." evidence="7" ref="4">
    <original>Q</original>
    <variation>E</variation>
    <location>
        <position position="234"/>
    </location>
</feature>
<dbReference type="EMBL" id="AC002343">
    <property type="protein sequence ID" value="AAB63618.1"/>
    <property type="molecule type" value="Genomic_DNA"/>
</dbReference>
<dbReference type="EMBL" id="AL109619">
    <property type="protein sequence ID" value="CAB51649.1"/>
    <property type="status" value="ALT_SEQ"/>
    <property type="molecule type" value="Genomic_DNA"/>
</dbReference>
<dbReference type="EMBL" id="AL161560">
    <property type="protein sequence ID" value="CAB81324.1"/>
    <property type="status" value="ALT_SEQ"/>
    <property type="molecule type" value="Genomic_DNA"/>
</dbReference>
<dbReference type="EMBL" id="CP002687">
    <property type="protein sequence ID" value="AEE84846.1"/>
    <property type="molecule type" value="Genomic_DNA"/>
</dbReference>
<dbReference type="EMBL" id="AY037220">
    <property type="protein sequence ID" value="AAK59820.1"/>
    <property type="molecule type" value="mRNA"/>
</dbReference>
<dbReference type="EMBL" id="BT008771">
    <property type="protein sequence ID" value="AAP68210.1"/>
    <property type="molecule type" value="mRNA"/>
</dbReference>
<dbReference type="EMBL" id="AY087686">
    <property type="protein sequence ID" value="AAM65223.1"/>
    <property type="molecule type" value="mRNA"/>
</dbReference>
<dbReference type="PIR" id="T13450">
    <property type="entry name" value="T13450"/>
</dbReference>
<dbReference type="RefSeq" id="NP_567693.1">
    <molecule id="Q8LAP8-1"/>
    <property type="nucleotide sequence ID" value="NM_118538.4"/>
</dbReference>
<dbReference type="BioGRID" id="13795">
    <property type="interactions" value="1"/>
</dbReference>
<dbReference type="FunCoup" id="Q8LAP8">
    <property type="interactions" value="1769"/>
</dbReference>
<dbReference type="IntAct" id="Q8LAP8">
    <property type="interactions" value="1"/>
</dbReference>
<dbReference type="STRING" id="3702.Q8LAP8"/>
<dbReference type="GlyGen" id="Q8LAP8">
    <property type="glycosylation" value="1 site, 1 O-linked glycan (1 site)"/>
</dbReference>
<dbReference type="PaxDb" id="3702-AT4G24060.1"/>
<dbReference type="ProteomicsDB" id="222122">
    <molecule id="Q8LAP8-1"/>
</dbReference>
<dbReference type="EnsemblPlants" id="AT4G24060.1">
    <molecule id="Q8LAP8-1"/>
    <property type="protein sequence ID" value="AT4G24060.1"/>
    <property type="gene ID" value="AT4G24060"/>
</dbReference>
<dbReference type="GeneID" id="828506"/>
<dbReference type="Gramene" id="AT4G24060.1">
    <molecule id="Q8LAP8-1"/>
    <property type="protein sequence ID" value="AT4G24060.1"/>
    <property type="gene ID" value="AT4G24060"/>
</dbReference>
<dbReference type="KEGG" id="ath:AT4G24060"/>
<dbReference type="Araport" id="AT4G24060"/>
<dbReference type="TAIR" id="AT4G24060"/>
<dbReference type="eggNOG" id="ENOG502QPN9">
    <property type="taxonomic scope" value="Eukaryota"/>
</dbReference>
<dbReference type="HOGENOM" id="CLU_036438_5_1_1"/>
<dbReference type="InParanoid" id="Q8LAP8"/>
<dbReference type="OMA" id="KPCNTNT"/>
<dbReference type="PhylomeDB" id="Q8LAP8"/>
<dbReference type="PRO" id="PR:Q8LAP8"/>
<dbReference type="Proteomes" id="UP000006548">
    <property type="component" value="Chromosome 4"/>
</dbReference>
<dbReference type="ExpressionAtlas" id="Q8LAP8">
    <property type="expression patterns" value="baseline and differential"/>
</dbReference>
<dbReference type="GO" id="GO:0005634">
    <property type="term" value="C:nucleus"/>
    <property type="evidence" value="ECO:0007669"/>
    <property type="project" value="UniProtKB-SubCell"/>
</dbReference>
<dbReference type="GO" id="GO:0003677">
    <property type="term" value="F:DNA binding"/>
    <property type="evidence" value="ECO:0007669"/>
    <property type="project" value="UniProtKB-KW"/>
</dbReference>
<dbReference type="GO" id="GO:0003700">
    <property type="term" value="F:DNA-binding transcription factor activity"/>
    <property type="evidence" value="ECO:0000250"/>
    <property type="project" value="TAIR"/>
</dbReference>
<dbReference type="GO" id="GO:0008270">
    <property type="term" value="F:zinc ion binding"/>
    <property type="evidence" value="ECO:0007669"/>
    <property type="project" value="UniProtKB-KW"/>
</dbReference>
<dbReference type="GO" id="GO:0006355">
    <property type="term" value="P:regulation of DNA-templated transcription"/>
    <property type="evidence" value="ECO:0000304"/>
    <property type="project" value="TAIR"/>
</dbReference>
<dbReference type="InterPro" id="IPR045174">
    <property type="entry name" value="Dof"/>
</dbReference>
<dbReference type="InterPro" id="IPR003851">
    <property type="entry name" value="Znf_Dof"/>
</dbReference>
<dbReference type="PANTHER" id="PTHR31992">
    <property type="entry name" value="DOF ZINC FINGER PROTEIN DOF1.4-RELATED"/>
    <property type="match status" value="1"/>
</dbReference>
<dbReference type="PANTHER" id="PTHR31992:SF285">
    <property type="entry name" value="DOF ZINC FINGER PROTEIN DOF4.6"/>
    <property type="match status" value="1"/>
</dbReference>
<dbReference type="Pfam" id="PF02701">
    <property type="entry name" value="Zn_ribbon_Dof"/>
    <property type="match status" value="1"/>
</dbReference>
<dbReference type="PROSITE" id="PS01361">
    <property type="entry name" value="ZF_DOF_1"/>
    <property type="match status" value="1"/>
</dbReference>
<dbReference type="PROSITE" id="PS50884">
    <property type="entry name" value="ZF_DOF_2"/>
    <property type="match status" value="1"/>
</dbReference>
<protein>
    <recommendedName>
        <fullName evidence="5">Dof zinc finger protein DOF4.6</fullName>
        <shortName evidence="5">AtDOF4.6</shortName>
    </recommendedName>
</protein>